<protein>
    <recommendedName>
        <fullName evidence="1">Putative septation protein SpoVG</fullName>
    </recommendedName>
</protein>
<organism>
    <name type="scientific">Acholeplasma laidlawii (strain PG-8A)</name>
    <dbReference type="NCBI Taxonomy" id="441768"/>
    <lineage>
        <taxon>Bacteria</taxon>
        <taxon>Bacillati</taxon>
        <taxon>Mycoplasmatota</taxon>
        <taxon>Mollicutes</taxon>
        <taxon>Acholeplasmatales</taxon>
        <taxon>Acholeplasmataceae</taxon>
        <taxon>Acholeplasma</taxon>
    </lineage>
</organism>
<accession>A9NE80</accession>
<gene>
    <name evidence="1" type="primary">spoVG</name>
    <name type="ordered locus">ACL_0017</name>
</gene>
<name>SP5G_ACHLI</name>
<keyword id="KW-0131">Cell cycle</keyword>
<keyword id="KW-0132">Cell division</keyword>
<keyword id="KW-1185">Reference proteome</keyword>
<keyword id="KW-0717">Septation</keyword>
<proteinExistence type="inferred from homology"/>
<feature type="chain" id="PRO_1000083843" description="Putative septation protein SpoVG">
    <location>
        <begin position="1"/>
        <end position="94"/>
    </location>
</feature>
<dbReference type="EMBL" id="CP000896">
    <property type="protein sequence ID" value="ABX80660.1"/>
    <property type="molecule type" value="Genomic_DNA"/>
</dbReference>
<dbReference type="RefSeq" id="WP_012241991.1">
    <property type="nucleotide sequence ID" value="NC_010163.1"/>
</dbReference>
<dbReference type="SMR" id="A9NE80"/>
<dbReference type="STRING" id="441768.ACL_0017"/>
<dbReference type="GeneID" id="41338221"/>
<dbReference type="KEGG" id="acl:ACL_0017"/>
<dbReference type="eggNOG" id="COG2088">
    <property type="taxonomic scope" value="Bacteria"/>
</dbReference>
<dbReference type="HOGENOM" id="CLU_103669_2_1_14"/>
<dbReference type="OrthoDB" id="9796286at2"/>
<dbReference type="Proteomes" id="UP000008558">
    <property type="component" value="Chromosome"/>
</dbReference>
<dbReference type="GO" id="GO:0000917">
    <property type="term" value="P:division septum assembly"/>
    <property type="evidence" value="ECO:0007669"/>
    <property type="project" value="UniProtKB-KW"/>
</dbReference>
<dbReference type="GO" id="GO:0030435">
    <property type="term" value="P:sporulation resulting in formation of a cellular spore"/>
    <property type="evidence" value="ECO:0007669"/>
    <property type="project" value="InterPro"/>
</dbReference>
<dbReference type="Gene3D" id="3.30.1120.40">
    <property type="entry name" value="Stage V sporulation protein G"/>
    <property type="match status" value="1"/>
</dbReference>
<dbReference type="HAMAP" id="MF_00819">
    <property type="entry name" value="SpoVG"/>
    <property type="match status" value="1"/>
</dbReference>
<dbReference type="InterPro" id="IPR007170">
    <property type="entry name" value="SpoVG"/>
</dbReference>
<dbReference type="InterPro" id="IPR036751">
    <property type="entry name" value="SpoVG_sf"/>
</dbReference>
<dbReference type="NCBIfam" id="NF009749">
    <property type="entry name" value="PRK13259.1"/>
    <property type="match status" value="1"/>
</dbReference>
<dbReference type="PANTHER" id="PTHR38429">
    <property type="entry name" value="SEPTATION PROTEIN SPOVG-RELATED"/>
    <property type="match status" value="1"/>
</dbReference>
<dbReference type="PANTHER" id="PTHR38429:SF1">
    <property type="entry name" value="SEPTATION PROTEIN SPOVG-RELATED"/>
    <property type="match status" value="1"/>
</dbReference>
<dbReference type="Pfam" id="PF04026">
    <property type="entry name" value="SpoVG"/>
    <property type="match status" value="1"/>
</dbReference>
<dbReference type="SUPFAM" id="SSF160537">
    <property type="entry name" value="SpoVG-like"/>
    <property type="match status" value="1"/>
</dbReference>
<reference key="1">
    <citation type="journal article" date="2011" name="J. Bacteriol.">
        <title>Complete genome and proteome of Acholeplasma laidlawii.</title>
        <authorList>
            <person name="Lazarev V.N."/>
            <person name="Levitskii S.A."/>
            <person name="Basovskii Y.I."/>
            <person name="Chukin M.M."/>
            <person name="Akopian T.A."/>
            <person name="Vereshchagin V.V."/>
            <person name="Kostrjukova E.S."/>
            <person name="Kovaleva G.Y."/>
            <person name="Kazanov M.D."/>
            <person name="Malko D.B."/>
            <person name="Vitreschak A.G."/>
            <person name="Sernova N.V."/>
            <person name="Gelfand M.S."/>
            <person name="Demina I.A."/>
            <person name="Serebryakova M.V."/>
            <person name="Galyamina M.A."/>
            <person name="Vtyurin N.N."/>
            <person name="Rogov S.I."/>
            <person name="Alexeev D.G."/>
            <person name="Ladygina V.G."/>
            <person name="Govorun V.M."/>
        </authorList>
    </citation>
    <scope>NUCLEOTIDE SEQUENCE [LARGE SCALE GENOMIC DNA]</scope>
    <source>
        <strain>PG-8A</strain>
    </source>
</reference>
<sequence>MKITDVRVRHVSSDSRLKGVVTITFEDAFVVHDIRVIEGENGLFVAMPSKKMPNGGFRDIAHPIHADMRKQIEDSIIKAYKETLDAEATASVEE</sequence>
<evidence type="ECO:0000255" key="1">
    <source>
        <dbReference type="HAMAP-Rule" id="MF_00819"/>
    </source>
</evidence>
<comment type="function">
    <text evidence="1">Could be involved in septation.</text>
</comment>
<comment type="similarity">
    <text evidence="1">Belongs to the SpoVG family.</text>
</comment>